<dbReference type="EC" id="6.1.1.15" evidence="1"/>
<dbReference type="EMBL" id="AM408590">
    <property type="protein sequence ID" value="CAL72854.1"/>
    <property type="molecule type" value="Genomic_DNA"/>
</dbReference>
<dbReference type="RefSeq" id="WP_010950787.1">
    <property type="nucleotide sequence ID" value="NC_008769.1"/>
</dbReference>
<dbReference type="SMR" id="A1KMI8"/>
<dbReference type="KEGG" id="mbb:BCG_2865c"/>
<dbReference type="HOGENOM" id="CLU_016739_0_0_11"/>
<dbReference type="Proteomes" id="UP000001472">
    <property type="component" value="Chromosome"/>
</dbReference>
<dbReference type="GO" id="GO:0005829">
    <property type="term" value="C:cytosol"/>
    <property type="evidence" value="ECO:0007669"/>
    <property type="project" value="TreeGrafter"/>
</dbReference>
<dbReference type="GO" id="GO:0002161">
    <property type="term" value="F:aminoacyl-tRNA deacylase activity"/>
    <property type="evidence" value="ECO:0007669"/>
    <property type="project" value="InterPro"/>
</dbReference>
<dbReference type="GO" id="GO:0005524">
    <property type="term" value="F:ATP binding"/>
    <property type="evidence" value="ECO:0007669"/>
    <property type="project" value="UniProtKB-UniRule"/>
</dbReference>
<dbReference type="GO" id="GO:0004827">
    <property type="term" value="F:proline-tRNA ligase activity"/>
    <property type="evidence" value="ECO:0007669"/>
    <property type="project" value="UniProtKB-UniRule"/>
</dbReference>
<dbReference type="GO" id="GO:0006433">
    <property type="term" value="P:prolyl-tRNA aminoacylation"/>
    <property type="evidence" value="ECO:0007669"/>
    <property type="project" value="UniProtKB-UniRule"/>
</dbReference>
<dbReference type="CDD" id="cd00861">
    <property type="entry name" value="ProRS_anticodon_short"/>
    <property type="match status" value="1"/>
</dbReference>
<dbReference type="CDD" id="cd00779">
    <property type="entry name" value="ProRS_core_prok"/>
    <property type="match status" value="1"/>
</dbReference>
<dbReference type="FunFam" id="3.30.930.10:FF:000070">
    <property type="entry name" value="Proline--tRNA ligase"/>
    <property type="match status" value="1"/>
</dbReference>
<dbReference type="FunFam" id="3.30.930.10:FF:000120">
    <property type="entry name" value="Proline--tRNA ligase"/>
    <property type="match status" value="1"/>
</dbReference>
<dbReference type="FunFam" id="3.40.50.800:FF:000024">
    <property type="entry name" value="Proline--tRNA ligase"/>
    <property type="match status" value="1"/>
</dbReference>
<dbReference type="FunFam" id="3.90.960.10:FF:000008">
    <property type="entry name" value="Proline--tRNA ligase"/>
    <property type="match status" value="1"/>
</dbReference>
<dbReference type="Gene3D" id="3.40.50.800">
    <property type="entry name" value="Anticodon-binding domain"/>
    <property type="match status" value="1"/>
</dbReference>
<dbReference type="Gene3D" id="3.30.930.10">
    <property type="entry name" value="Bira Bifunctional Protein, Domain 2"/>
    <property type="match status" value="2"/>
</dbReference>
<dbReference type="Gene3D" id="3.90.960.10">
    <property type="entry name" value="YbaK/aminoacyl-tRNA synthetase-associated domain"/>
    <property type="match status" value="1"/>
</dbReference>
<dbReference type="HAMAP" id="MF_01569">
    <property type="entry name" value="Pro_tRNA_synth_type1"/>
    <property type="match status" value="1"/>
</dbReference>
<dbReference type="InterPro" id="IPR002314">
    <property type="entry name" value="aa-tRNA-synt_IIb"/>
</dbReference>
<dbReference type="InterPro" id="IPR006195">
    <property type="entry name" value="aa-tRNA-synth_II"/>
</dbReference>
<dbReference type="InterPro" id="IPR045864">
    <property type="entry name" value="aa-tRNA-synth_II/BPL/LPL"/>
</dbReference>
<dbReference type="InterPro" id="IPR004154">
    <property type="entry name" value="Anticodon-bd"/>
</dbReference>
<dbReference type="InterPro" id="IPR036621">
    <property type="entry name" value="Anticodon-bd_dom_sf"/>
</dbReference>
<dbReference type="InterPro" id="IPR002316">
    <property type="entry name" value="Pro-tRNA-ligase_IIa"/>
</dbReference>
<dbReference type="InterPro" id="IPR004500">
    <property type="entry name" value="Pro-tRNA-synth_IIa_bac-type"/>
</dbReference>
<dbReference type="InterPro" id="IPR023717">
    <property type="entry name" value="Pro-tRNA-Synthase_IIa_type1"/>
</dbReference>
<dbReference type="InterPro" id="IPR050062">
    <property type="entry name" value="Pro-tRNA_synthetase"/>
</dbReference>
<dbReference type="InterPro" id="IPR044140">
    <property type="entry name" value="ProRS_anticodon_short"/>
</dbReference>
<dbReference type="InterPro" id="IPR033730">
    <property type="entry name" value="ProRS_core_prok"/>
</dbReference>
<dbReference type="InterPro" id="IPR036754">
    <property type="entry name" value="YbaK/aa-tRNA-synt-asso_dom_sf"/>
</dbReference>
<dbReference type="InterPro" id="IPR007214">
    <property type="entry name" value="YbaK/aa-tRNA-synth-assoc-dom"/>
</dbReference>
<dbReference type="NCBIfam" id="NF006625">
    <property type="entry name" value="PRK09194.1"/>
    <property type="match status" value="1"/>
</dbReference>
<dbReference type="NCBIfam" id="TIGR00409">
    <property type="entry name" value="proS_fam_II"/>
    <property type="match status" value="1"/>
</dbReference>
<dbReference type="PANTHER" id="PTHR42753">
    <property type="entry name" value="MITOCHONDRIAL RIBOSOME PROTEIN L39/PROLYL-TRNA LIGASE FAMILY MEMBER"/>
    <property type="match status" value="1"/>
</dbReference>
<dbReference type="PANTHER" id="PTHR42753:SF2">
    <property type="entry name" value="PROLINE--TRNA LIGASE"/>
    <property type="match status" value="1"/>
</dbReference>
<dbReference type="Pfam" id="PF03129">
    <property type="entry name" value="HGTP_anticodon"/>
    <property type="match status" value="1"/>
</dbReference>
<dbReference type="Pfam" id="PF00587">
    <property type="entry name" value="tRNA-synt_2b"/>
    <property type="match status" value="1"/>
</dbReference>
<dbReference type="Pfam" id="PF04073">
    <property type="entry name" value="tRNA_edit"/>
    <property type="match status" value="1"/>
</dbReference>
<dbReference type="PRINTS" id="PR01046">
    <property type="entry name" value="TRNASYNTHPRO"/>
</dbReference>
<dbReference type="SUPFAM" id="SSF52954">
    <property type="entry name" value="Class II aaRS ABD-related"/>
    <property type="match status" value="1"/>
</dbReference>
<dbReference type="SUPFAM" id="SSF55681">
    <property type="entry name" value="Class II aaRS and biotin synthetases"/>
    <property type="match status" value="1"/>
</dbReference>
<dbReference type="SUPFAM" id="SSF55826">
    <property type="entry name" value="YbaK/ProRS associated domain"/>
    <property type="match status" value="1"/>
</dbReference>
<dbReference type="PROSITE" id="PS50862">
    <property type="entry name" value="AA_TRNA_LIGASE_II"/>
    <property type="match status" value="1"/>
</dbReference>
<sequence length="582" mass="63351">MITRMSELFLRTLRDDPADAEVASHKLLIRAGYIRPVAPGLYSWLPLGLRVLRNIERVIRDEMNAIGGQEILFPALLPRAPYETTNRWTQYGDSVFRLKDRRGNDYLLGPTHEELFTLTVKGEYSSYKDFPLTLYQIQTKYRDEARPRAGILRAREFVMKDSYSFDIDAAGLKAAYRAHREAYQRIFDRLQVRYVIVSAVSGAMGGSASEEFLAESPSGEDAFVRCLESGYTANVEAVVTARPDTLPIDGLPEAVVHDTGDTPTIASLVAWANEADLGRTVTAADTLKNVLIKVRQPGGDTELLAIGVPGDREVDDKRLGAALEPADYALLDDDDFAKHPFLVKGYIGPKALRENNVRYLVDPRIVDGTSWITGADQPGRHVVGLVAGRDFTADGTIEAAEVREGDPSPDGAGPLVMARGIEIGHIFQLGSKYTDAFTADVLGEDGKPVRLTMGSYGIGVSRLVAVVAEQHHDELGLRWPSTVAPFDVHLVIANKDAQARAGATALAADLDRLGVEVLLDDRQASPGVKFKDAELLGMPWIVVVGRGWADGVVELRDRFSGQTRELVAGASLATDIAAAVTG</sequence>
<keyword id="KW-0030">Aminoacyl-tRNA synthetase</keyword>
<keyword id="KW-0067">ATP-binding</keyword>
<keyword id="KW-0963">Cytoplasm</keyword>
<keyword id="KW-0436">Ligase</keyword>
<keyword id="KW-0547">Nucleotide-binding</keyword>
<keyword id="KW-0648">Protein biosynthesis</keyword>
<reference key="1">
    <citation type="journal article" date="2007" name="Proc. Natl. Acad. Sci. U.S.A.">
        <title>Genome plasticity of BCG and impact on vaccine efficacy.</title>
        <authorList>
            <person name="Brosch R."/>
            <person name="Gordon S.V."/>
            <person name="Garnier T."/>
            <person name="Eiglmeier K."/>
            <person name="Frigui W."/>
            <person name="Valenti P."/>
            <person name="Dos Santos S."/>
            <person name="Duthoy S."/>
            <person name="Lacroix C."/>
            <person name="Garcia-Pelayo C."/>
            <person name="Inwald J.K."/>
            <person name="Golby P."/>
            <person name="Garcia J.N."/>
            <person name="Hewinson R.G."/>
            <person name="Behr M.A."/>
            <person name="Quail M.A."/>
            <person name="Churcher C."/>
            <person name="Barrell B.G."/>
            <person name="Parkhill J."/>
            <person name="Cole S.T."/>
        </authorList>
    </citation>
    <scope>NUCLEOTIDE SEQUENCE [LARGE SCALE GENOMIC DNA]</scope>
    <source>
        <strain>BCG / Pasteur 1173P2</strain>
    </source>
</reference>
<protein>
    <recommendedName>
        <fullName evidence="1">Proline--tRNA ligase</fullName>
        <ecNumber evidence="1">6.1.1.15</ecNumber>
    </recommendedName>
    <alternativeName>
        <fullName evidence="1">Prolyl-tRNA synthetase</fullName>
        <shortName evidence="1">ProRS</shortName>
    </alternativeName>
</protein>
<name>SYP_MYCBP</name>
<comment type="function">
    <text evidence="1">Catalyzes the attachment of proline to tRNA(Pro) in a two-step reaction: proline is first activated by ATP to form Pro-AMP and then transferred to the acceptor end of tRNA(Pro). As ProRS can inadvertently accommodate and process non-cognate amino acids such as alanine and cysteine, to avoid such errors it has two additional distinct editing activities against alanine. One activity is designated as 'pretransfer' editing and involves the tRNA(Pro)-independent hydrolysis of activated Ala-AMP. The other activity is designated 'posttransfer' editing and involves deacylation of mischarged Ala-tRNA(Pro). The misacylated Cys-tRNA(Pro) is not edited by ProRS.</text>
</comment>
<comment type="catalytic activity">
    <reaction evidence="1">
        <text>tRNA(Pro) + L-proline + ATP = L-prolyl-tRNA(Pro) + AMP + diphosphate</text>
        <dbReference type="Rhea" id="RHEA:14305"/>
        <dbReference type="Rhea" id="RHEA-COMP:9700"/>
        <dbReference type="Rhea" id="RHEA-COMP:9702"/>
        <dbReference type="ChEBI" id="CHEBI:30616"/>
        <dbReference type="ChEBI" id="CHEBI:33019"/>
        <dbReference type="ChEBI" id="CHEBI:60039"/>
        <dbReference type="ChEBI" id="CHEBI:78442"/>
        <dbReference type="ChEBI" id="CHEBI:78532"/>
        <dbReference type="ChEBI" id="CHEBI:456215"/>
        <dbReference type="EC" id="6.1.1.15"/>
    </reaction>
</comment>
<comment type="subunit">
    <text evidence="1">Homodimer.</text>
</comment>
<comment type="subcellular location">
    <subcellularLocation>
        <location evidence="1">Cytoplasm</location>
    </subcellularLocation>
</comment>
<comment type="domain">
    <text evidence="1">Consists of three domains: the N-terminal catalytic domain, the editing domain and the C-terminal anticodon-binding domain.</text>
</comment>
<comment type="similarity">
    <text evidence="1">Belongs to the class-II aminoacyl-tRNA synthetase family. ProS type 1 subfamily.</text>
</comment>
<accession>A1KMI8</accession>
<feature type="chain" id="PRO_0000288350" description="Proline--tRNA ligase">
    <location>
        <begin position="1"/>
        <end position="582"/>
    </location>
</feature>
<organism>
    <name type="scientific">Mycobacterium bovis (strain BCG / Pasteur 1173P2)</name>
    <dbReference type="NCBI Taxonomy" id="410289"/>
    <lineage>
        <taxon>Bacteria</taxon>
        <taxon>Bacillati</taxon>
        <taxon>Actinomycetota</taxon>
        <taxon>Actinomycetes</taxon>
        <taxon>Mycobacteriales</taxon>
        <taxon>Mycobacteriaceae</taxon>
        <taxon>Mycobacterium</taxon>
        <taxon>Mycobacterium tuberculosis complex</taxon>
    </lineage>
</organism>
<evidence type="ECO:0000255" key="1">
    <source>
        <dbReference type="HAMAP-Rule" id="MF_01569"/>
    </source>
</evidence>
<gene>
    <name evidence="1" type="primary">proS</name>
    <name type="ordered locus">BCG_2865c</name>
</gene>
<proteinExistence type="inferred from homology"/>